<feature type="chain" id="PRO_0000095977" description="Protein translocase subunit SecF">
    <location>
        <begin position="1"/>
        <end position="323"/>
    </location>
</feature>
<feature type="topological domain" description="Cytoplasmic" evidence="1">
    <location>
        <begin position="1"/>
        <end position="22"/>
    </location>
</feature>
<feature type="transmembrane region" description="Helical" evidence="2">
    <location>
        <begin position="23"/>
        <end position="43"/>
    </location>
</feature>
<feature type="topological domain" description="Periplasmic" evidence="1">
    <location>
        <begin position="44"/>
        <end position="142"/>
    </location>
</feature>
<feature type="transmembrane region" description="Helical" evidence="2">
    <location>
        <begin position="143"/>
        <end position="163"/>
    </location>
</feature>
<feature type="topological domain" description="Cytoplasmic" evidence="1">
    <location>
        <begin position="164"/>
        <end position="170"/>
    </location>
</feature>
<feature type="transmembrane region" description="Helical" evidence="2">
    <location>
        <begin position="171"/>
        <end position="191"/>
    </location>
</feature>
<feature type="topological domain" description="Periplasmic" evidence="1">
    <location>
        <begin position="192"/>
        <end position="196"/>
    </location>
</feature>
<feature type="transmembrane region" description="Helical" evidence="2">
    <location>
        <begin position="197"/>
        <end position="217"/>
    </location>
</feature>
<feature type="topological domain" description="Cytoplasmic" evidence="1">
    <location>
        <begin position="218"/>
        <end position="247"/>
    </location>
</feature>
<feature type="transmembrane region" description="Helical" evidence="2">
    <location>
        <begin position="248"/>
        <end position="270"/>
    </location>
</feature>
<feature type="topological domain" description="Periplasmic" evidence="1">
    <location>
        <begin position="271"/>
        <end position="280"/>
    </location>
</feature>
<feature type="transmembrane region" description="Helical" evidence="2">
    <location>
        <begin position="281"/>
        <end position="301"/>
    </location>
</feature>
<feature type="topological domain" description="Cytoplasmic" evidence="1">
    <location>
        <begin position="302"/>
        <end position="323"/>
    </location>
</feature>
<accession>P0AG95</accession>
<accession>P19674</accession>
<accession>P77113</accession>
<gene>
    <name evidence="2" type="primary">secF</name>
    <name type="ordered locus">Z0508</name>
    <name type="ordered locus">ECs0460</name>
</gene>
<comment type="function">
    <text evidence="2">Part of the Sec protein translocase complex. Interacts with the SecYEG preprotein conducting channel. SecDF uses the proton motive force (PMF) to complete protein translocation after the ATP-dependent function of SecA.</text>
</comment>
<comment type="subunit">
    <text evidence="2">Forms a complex with SecD. Part of the essential Sec protein translocation apparatus which comprises SecA, SecYEG and auxiliary proteins SecDF-YajC and YidC.</text>
</comment>
<comment type="subcellular location">
    <subcellularLocation>
        <location evidence="2">Cell inner membrane</location>
        <topology evidence="2">Multi-pass membrane protein</topology>
    </subcellularLocation>
</comment>
<comment type="similarity">
    <text evidence="2">Belongs to the SecD/SecF family. SecF subfamily.</text>
</comment>
<sequence>MAQEYTVEQLNHGRKVYDFMRWDYWAFGISGLLLIAAIVIMGVRGFNWGLDFTGGTVIEITLEKPAEIDVMRDALQKAGFEEPMLQNFGSSHDIMVRMPPAEGETGGQVLGSQVLKVINESTNQNAAVKRIEFVGPSVGADLAQTGAMALMAALLSILVYVGFRFEWRLAAGVVIALAHDVIITLGILSLFHIEIDLTIVASLMSVIGYSLNDSIVVSDRIRENFRKIRRGTPYEIFNVSLTQTLHRTLITSGTTLMVILMLYLFGGPVLEGFSLTMLIGVSIGTASSIYVASALALKLGMKREHMLQQKVEKEGADQPSILP</sequence>
<evidence type="ECO:0000255" key="1"/>
<evidence type="ECO:0000255" key="2">
    <source>
        <dbReference type="HAMAP-Rule" id="MF_01464"/>
    </source>
</evidence>
<reference key="1">
    <citation type="journal article" date="2001" name="Nature">
        <title>Genome sequence of enterohaemorrhagic Escherichia coli O157:H7.</title>
        <authorList>
            <person name="Perna N.T."/>
            <person name="Plunkett G. III"/>
            <person name="Burland V."/>
            <person name="Mau B."/>
            <person name="Glasner J.D."/>
            <person name="Rose D.J."/>
            <person name="Mayhew G.F."/>
            <person name="Evans P.S."/>
            <person name="Gregor J."/>
            <person name="Kirkpatrick H.A."/>
            <person name="Posfai G."/>
            <person name="Hackett J."/>
            <person name="Klink S."/>
            <person name="Boutin A."/>
            <person name="Shao Y."/>
            <person name="Miller L."/>
            <person name="Grotbeck E.J."/>
            <person name="Davis N.W."/>
            <person name="Lim A."/>
            <person name="Dimalanta E.T."/>
            <person name="Potamousis K."/>
            <person name="Apodaca J."/>
            <person name="Anantharaman T.S."/>
            <person name="Lin J."/>
            <person name="Yen G."/>
            <person name="Schwartz D.C."/>
            <person name="Welch R.A."/>
            <person name="Blattner F.R."/>
        </authorList>
    </citation>
    <scope>NUCLEOTIDE SEQUENCE [LARGE SCALE GENOMIC DNA]</scope>
    <source>
        <strain>O157:H7 / EDL933 / ATCC 700927 / EHEC</strain>
    </source>
</reference>
<reference key="2">
    <citation type="journal article" date="2001" name="DNA Res.">
        <title>Complete genome sequence of enterohemorrhagic Escherichia coli O157:H7 and genomic comparison with a laboratory strain K-12.</title>
        <authorList>
            <person name="Hayashi T."/>
            <person name="Makino K."/>
            <person name="Ohnishi M."/>
            <person name="Kurokawa K."/>
            <person name="Ishii K."/>
            <person name="Yokoyama K."/>
            <person name="Han C.-G."/>
            <person name="Ohtsubo E."/>
            <person name="Nakayama K."/>
            <person name="Murata T."/>
            <person name="Tanaka M."/>
            <person name="Tobe T."/>
            <person name="Iida T."/>
            <person name="Takami H."/>
            <person name="Honda T."/>
            <person name="Sasakawa C."/>
            <person name="Ogasawara N."/>
            <person name="Yasunaga T."/>
            <person name="Kuhara S."/>
            <person name="Shiba T."/>
            <person name="Hattori M."/>
            <person name="Shinagawa H."/>
        </authorList>
    </citation>
    <scope>NUCLEOTIDE SEQUENCE [LARGE SCALE GENOMIC DNA]</scope>
    <source>
        <strain>O157:H7 / Sakai / RIMD 0509952 / EHEC</strain>
    </source>
</reference>
<dbReference type="EMBL" id="AE005174">
    <property type="protein sequence ID" value="AAG54756.1"/>
    <property type="molecule type" value="Genomic_DNA"/>
</dbReference>
<dbReference type="EMBL" id="BA000007">
    <property type="protein sequence ID" value="BAB33883.1"/>
    <property type="molecule type" value="Genomic_DNA"/>
</dbReference>
<dbReference type="PIR" id="D90686">
    <property type="entry name" value="D90686"/>
</dbReference>
<dbReference type="PIR" id="H85536">
    <property type="entry name" value="H85536"/>
</dbReference>
<dbReference type="RefSeq" id="NP_308487.1">
    <property type="nucleotide sequence ID" value="NC_002695.1"/>
</dbReference>
<dbReference type="RefSeq" id="WP_000046637.1">
    <property type="nucleotide sequence ID" value="NZ_VOAI01000005.1"/>
</dbReference>
<dbReference type="SMR" id="P0AG95"/>
<dbReference type="STRING" id="155864.Z0508"/>
<dbReference type="GeneID" id="914562"/>
<dbReference type="GeneID" id="93777051"/>
<dbReference type="KEGG" id="ece:Z0508"/>
<dbReference type="KEGG" id="ecs:ECs_0460"/>
<dbReference type="PATRIC" id="fig|386585.9.peg.560"/>
<dbReference type="eggNOG" id="COG0341">
    <property type="taxonomic scope" value="Bacteria"/>
</dbReference>
<dbReference type="HOGENOM" id="CLU_050012_1_0_6"/>
<dbReference type="OMA" id="AFEWRMA"/>
<dbReference type="Proteomes" id="UP000000558">
    <property type="component" value="Chromosome"/>
</dbReference>
<dbReference type="Proteomes" id="UP000002519">
    <property type="component" value="Chromosome"/>
</dbReference>
<dbReference type="GO" id="GO:0005886">
    <property type="term" value="C:plasma membrane"/>
    <property type="evidence" value="ECO:0007669"/>
    <property type="project" value="UniProtKB-SubCell"/>
</dbReference>
<dbReference type="GO" id="GO:0015450">
    <property type="term" value="F:protein-transporting ATPase activity"/>
    <property type="evidence" value="ECO:0007669"/>
    <property type="project" value="InterPro"/>
</dbReference>
<dbReference type="GO" id="GO:0065002">
    <property type="term" value="P:intracellular protein transmembrane transport"/>
    <property type="evidence" value="ECO:0007669"/>
    <property type="project" value="UniProtKB-UniRule"/>
</dbReference>
<dbReference type="GO" id="GO:0006605">
    <property type="term" value="P:protein targeting"/>
    <property type="evidence" value="ECO:0007669"/>
    <property type="project" value="UniProtKB-UniRule"/>
</dbReference>
<dbReference type="GO" id="GO:0043952">
    <property type="term" value="P:protein transport by the Sec complex"/>
    <property type="evidence" value="ECO:0007669"/>
    <property type="project" value="UniProtKB-UniRule"/>
</dbReference>
<dbReference type="FunFam" id="1.20.1640.10:FF:000006">
    <property type="entry name" value="Protein-export membrane protein SecF"/>
    <property type="match status" value="1"/>
</dbReference>
<dbReference type="Gene3D" id="1.20.1640.10">
    <property type="entry name" value="Multidrug efflux transporter AcrB transmembrane domain"/>
    <property type="match status" value="1"/>
</dbReference>
<dbReference type="HAMAP" id="MF_01464_B">
    <property type="entry name" value="SecF_B"/>
    <property type="match status" value="1"/>
</dbReference>
<dbReference type="InterPro" id="IPR022813">
    <property type="entry name" value="SecD/SecF_arch_bac"/>
</dbReference>
<dbReference type="InterPro" id="IPR022645">
    <property type="entry name" value="SecD/SecF_bac"/>
</dbReference>
<dbReference type="InterPro" id="IPR022646">
    <property type="entry name" value="SecD/SecF_CS"/>
</dbReference>
<dbReference type="InterPro" id="IPR048634">
    <property type="entry name" value="SecD_SecF_C"/>
</dbReference>
<dbReference type="InterPro" id="IPR055344">
    <property type="entry name" value="SecD_SecF_C_bact"/>
</dbReference>
<dbReference type="InterPro" id="IPR005665">
    <property type="entry name" value="SecF_bac"/>
</dbReference>
<dbReference type="NCBIfam" id="TIGR00916">
    <property type="entry name" value="2A0604s01"/>
    <property type="match status" value="1"/>
</dbReference>
<dbReference type="NCBIfam" id="TIGR00966">
    <property type="entry name" value="transloc_SecF"/>
    <property type="match status" value="1"/>
</dbReference>
<dbReference type="PANTHER" id="PTHR30081:SF8">
    <property type="entry name" value="PROTEIN TRANSLOCASE SUBUNIT SECF"/>
    <property type="match status" value="1"/>
</dbReference>
<dbReference type="PANTHER" id="PTHR30081">
    <property type="entry name" value="PROTEIN-EXPORT MEMBRANE PROTEIN SEC"/>
    <property type="match status" value="1"/>
</dbReference>
<dbReference type="Pfam" id="PF07549">
    <property type="entry name" value="Sec_GG"/>
    <property type="match status" value="1"/>
</dbReference>
<dbReference type="Pfam" id="PF02355">
    <property type="entry name" value="SecD_SecF_C"/>
    <property type="match status" value="1"/>
</dbReference>
<dbReference type="PRINTS" id="PR01755">
    <property type="entry name" value="SECFTRNLCASE"/>
</dbReference>
<dbReference type="SUPFAM" id="SSF82866">
    <property type="entry name" value="Multidrug efflux transporter AcrB transmembrane domain"/>
    <property type="match status" value="1"/>
</dbReference>
<organism>
    <name type="scientific">Escherichia coli O157:H7</name>
    <dbReference type="NCBI Taxonomy" id="83334"/>
    <lineage>
        <taxon>Bacteria</taxon>
        <taxon>Pseudomonadati</taxon>
        <taxon>Pseudomonadota</taxon>
        <taxon>Gammaproteobacteria</taxon>
        <taxon>Enterobacterales</taxon>
        <taxon>Enterobacteriaceae</taxon>
        <taxon>Escherichia</taxon>
    </lineage>
</organism>
<proteinExistence type="inferred from homology"/>
<protein>
    <recommendedName>
        <fullName>Protein translocase subunit SecF</fullName>
    </recommendedName>
</protein>
<name>SECF_ECO57</name>
<keyword id="KW-0997">Cell inner membrane</keyword>
<keyword id="KW-1003">Cell membrane</keyword>
<keyword id="KW-0472">Membrane</keyword>
<keyword id="KW-0653">Protein transport</keyword>
<keyword id="KW-1185">Reference proteome</keyword>
<keyword id="KW-0811">Translocation</keyword>
<keyword id="KW-0812">Transmembrane</keyword>
<keyword id="KW-1133">Transmembrane helix</keyword>
<keyword id="KW-0813">Transport</keyword>